<evidence type="ECO:0000305" key="1"/>
<protein>
    <recommendedName>
        <fullName>UPF0339 protein YegP</fullName>
    </recommendedName>
</protein>
<accession>Q83KI3</accession>
<accession>Q7C0Y9</accession>
<keyword id="KW-1185">Reference proteome</keyword>
<keyword id="KW-0677">Repeat</keyword>
<name>YEGP_SHIFL</name>
<dbReference type="EMBL" id="AE005674">
    <property type="protein sequence ID" value="AAN43679.1"/>
    <property type="status" value="ALT_INIT"/>
    <property type="molecule type" value="Genomic_DNA"/>
</dbReference>
<dbReference type="EMBL" id="AE014073">
    <property type="protein sequence ID" value="AAP17505.1"/>
    <property type="status" value="ALT_INIT"/>
    <property type="molecule type" value="Genomic_DNA"/>
</dbReference>
<dbReference type="RefSeq" id="NP_707972.1">
    <property type="nucleotide sequence ID" value="NC_004337.2"/>
</dbReference>
<dbReference type="RefSeq" id="WP_000929408.1">
    <property type="nucleotide sequence ID" value="NZ_WPGW01000038.1"/>
</dbReference>
<dbReference type="BMRB" id="Q83KI3"/>
<dbReference type="SMR" id="Q83KI3"/>
<dbReference type="STRING" id="198214.SF2145"/>
<dbReference type="PaxDb" id="198214-SF2145"/>
<dbReference type="GeneID" id="1027346"/>
<dbReference type="KEGG" id="sfl:SF2145"/>
<dbReference type="KEGG" id="sfx:S2270"/>
<dbReference type="PATRIC" id="fig|198214.7.peg.2560"/>
<dbReference type="HOGENOM" id="CLU_163886_0_0_6"/>
<dbReference type="Proteomes" id="UP000001006">
    <property type="component" value="Chromosome"/>
</dbReference>
<dbReference type="Proteomes" id="UP000002673">
    <property type="component" value="Chromosome"/>
</dbReference>
<dbReference type="FunFam" id="2.30.29.80:FF:000001">
    <property type="entry name" value="DUF1508 domain-containing protein"/>
    <property type="match status" value="1"/>
</dbReference>
<dbReference type="Gene3D" id="2.30.29.80">
    <property type="match status" value="1"/>
</dbReference>
<dbReference type="InterPro" id="IPR010879">
    <property type="entry name" value="DUF1508"/>
</dbReference>
<dbReference type="InterPro" id="IPR051141">
    <property type="entry name" value="UPF0339_domain"/>
</dbReference>
<dbReference type="InterPro" id="IPR036913">
    <property type="entry name" value="YegP-like_sf"/>
</dbReference>
<dbReference type="PANTHER" id="PTHR40606">
    <property type="match status" value="1"/>
</dbReference>
<dbReference type="PANTHER" id="PTHR40606:SF1">
    <property type="entry name" value="UPF0339 PROTEIN YEGP"/>
    <property type="match status" value="1"/>
</dbReference>
<dbReference type="Pfam" id="PF07411">
    <property type="entry name" value="DUF1508"/>
    <property type="match status" value="2"/>
</dbReference>
<dbReference type="SUPFAM" id="SSF160113">
    <property type="entry name" value="YegP-like"/>
    <property type="match status" value="2"/>
</dbReference>
<proteinExistence type="inferred from homology"/>
<comment type="similarity">
    <text evidence="1">Belongs to the UPF0339 family. Duplicated subfamily.</text>
</comment>
<comment type="sequence caution" evidence="1">
    <conflict type="erroneous initiation">
        <sequence resource="EMBL-CDS" id="AAN43679"/>
    </conflict>
</comment>
<comment type="sequence caution" evidence="1">
    <conflict type="erroneous initiation">
        <sequence resource="EMBL-CDS" id="AAP17505"/>
    </conflict>
</comment>
<organism>
    <name type="scientific">Shigella flexneri</name>
    <dbReference type="NCBI Taxonomy" id="623"/>
    <lineage>
        <taxon>Bacteria</taxon>
        <taxon>Pseudomonadati</taxon>
        <taxon>Pseudomonadota</taxon>
        <taxon>Gammaproteobacteria</taxon>
        <taxon>Enterobacterales</taxon>
        <taxon>Enterobacteriaceae</taxon>
        <taxon>Shigella</taxon>
    </lineage>
</organism>
<reference key="1">
    <citation type="journal article" date="2002" name="Nucleic Acids Res.">
        <title>Genome sequence of Shigella flexneri 2a: insights into pathogenicity through comparison with genomes of Escherichia coli K12 and O157.</title>
        <authorList>
            <person name="Jin Q."/>
            <person name="Yuan Z."/>
            <person name="Xu J."/>
            <person name="Wang Y."/>
            <person name="Shen Y."/>
            <person name="Lu W."/>
            <person name="Wang J."/>
            <person name="Liu H."/>
            <person name="Yang J."/>
            <person name="Yang F."/>
            <person name="Zhang X."/>
            <person name="Zhang J."/>
            <person name="Yang G."/>
            <person name="Wu H."/>
            <person name="Qu D."/>
            <person name="Dong J."/>
            <person name="Sun L."/>
            <person name="Xue Y."/>
            <person name="Zhao A."/>
            <person name="Gao Y."/>
            <person name="Zhu J."/>
            <person name="Kan B."/>
            <person name="Ding K."/>
            <person name="Chen S."/>
            <person name="Cheng H."/>
            <person name="Yao Z."/>
            <person name="He B."/>
            <person name="Chen R."/>
            <person name="Ma D."/>
            <person name="Qiang B."/>
            <person name="Wen Y."/>
            <person name="Hou Y."/>
            <person name="Yu J."/>
        </authorList>
    </citation>
    <scope>NUCLEOTIDE SEQUENCE [LARGE SCALE GENOMIC DNA]</scope>
    <source>
        <strain>301 / Serotype 2a</strain>
    </source>
</reference>
<reference key="2">
    <citation type="journal article" date="2003" name="Infect. Immun.">
        <title>Complete genome sequence and comparative genomics of Shigella flexneri serotype 2a strain 2457T.</title>
        <authorList>
            <person name="Wei J."/>
            <person name="Goldberg M.B."/>
            <person name="Burland V."/>
            <person name="Venkatesan M.M."/>
            <person name="Deng W."/>
            <person name="Fournier G."/>
            <person name="Mayhew G.F."/>
            <person name="Plunkett G. III"/>
            <person name="Rose D.J."/>
            <person name="Darling A."/>
            <person name="Mau B."/>
            <person name="Perna N.T."/>
            <person name="Payne S.M."/>
            <person name="Runyen-Janecky L.J."/>
            <person name="Zhou S."/>
            <person name="Schwartz D.C."/>
            <person name="Blattner F.R."/>
        </authorList>
    </citation>
    <scope>NUCLEOTIDE SEQUENCE [LARGE SCALE GENOMIC DNA]</scope>
    <source>
        <strain>ATCC 700930 / 2457T / Serotype 2a</strain>
    </source>
</reference>
<sequence>MAGWFELSKSSDNQFRFVLKAGNGETILTSELYTSKASAEKGIASVRSNSPQEERYEKKTASNGKFYFNLKAANHQIIGSSQMYATAQSRETGIASVKANGTSQTVKDNT</sequence>
<feature type="chain" id="PRO_0000218147" description="UPF0339 protein YegP">
    <location>
        <begin position="1"/>
        <end position="110"/>
    </location>
</feature>
<feature type="repeat" description="1">
    <location>
        <begin position="10"/>
        <end position="58"/>
    </location>
</feature>
<feature type="repeat" description="2">
    <location>
        <begin position="61"/>
        <end position="109"/>
    </location>
</feature>
<gene>
    <name type="primary">yegP</name>
    <name type="ordered locus">SF2145</name>
    <name type="ordered locus">S2270</name>
</gene>